<proteinExistence type="inferred from homology"/>
<accession>P9WQB4</accession>
<accession>L0T9S9</accession>
<accession>P0A5N4</accession>
<accession>Q57353</accession>
<comment type="function">
    <text evidence="2">Antioxidant protein with alkyl hydroperoxidase activity. Required for the reduction of the AhpC active site cysteine residues and for the regeneration of the AhpC enzyme activity.</text>
</comment>
<comment type="function">
    <text evidence="1">Together with AhpC, DlaT and Lpd, constitutes an NADH-dependent peroxidase active against hydrogen and alkyl peroxides as well as serving as a peroxynitrite reductase, thus protecting the bacterium against reactive nitrogen intermediates and oxidative stress generated by the host immune system.</text>
</comment>
<comment type="catalytic activity">
    <reaction evidence="2">
        <text>N(6)-[(R)-dihydrolipoyl]-L-lysyl-[lipoyl-carrier protein] + a hydroperoxide = N(6)-[(R)-lipoyl]-L-lysyl-[lipoyl-carrier protein] + an alcohol + H2O</text>
        <dbReference type="Rhea" id="RHEA:62636"/>
        <dbReference type="Rhea" id="RHEA-COMP:10502"/>
        <dbReference type="Rhea" id="RHEA-COMP:16355"/>
        <dbReference type="ChEBI" id="CHEBI:15377"/>
        <dbReference type="ChEBI" id="CHEBI:30879"/>
        <dbReference type="ChEBI" id="CHEBI:35924"/>
        <dbReference type="ChEBI" id="CHEBI:83099"/>
        <dbReference type="ChEBI" id="CHEBI:83100"/>
        <dbReference type="EC" id="1.11.1.28"/>
    </reaction>
</comment>
<comment type="subunit">
    <text evidence="2">Homotrimer. Identified in a complex with AhpC, DlaT and Lpd (By similarity).</text>
</comment>
<comment type="similarity">
    <text evidence="2">Belongs to the AhpD family.</text>
</comment>
<gene>
    <name evidence="2" type="primary">ahpD</name>
    <name type="ordered locus">MT2504</name>
</gene>
<organism>
    <name type="scientific">Mycobacterium tuberculosis (strain CDC 1551 / Oshkosh)</name>
    <dbReference type="NCBI Taxonomy" id="83331"/>
    <lineage>
        <taxon>Bacteria</taxon>
        <taxon>Bacillati</taxon>
        <taxon>Actinomycetota</taxon>
        <taxon>Actinomycetes</taxon>
        <taxon>Mycobacteriales</taxon>
        <taxon>Mycobacteriaceae</taxon>
        <taxon>Mycobacterium</taxon>
        <taxon>Mycobacterium tuberculosis complex</taxon>
    </lineage>
</organism>
<feature type="chain" id="PRO_0000426805" description="Alkyl hydroperoxide reductase AhpD">
    <location>
        <begin position="1"/>
        <end position="177"/>
    </location>
</feature>
<feature type="active site" description="Proton donor" evidence="2">
    <location>
        <position position="130"/>
    </location>
</feature>
<feature type="active site" description="Cysteine sulfenic acid (-SOH) intermediate" evidence="2">
    <location>
        <position position="133"/>
    </location>
</feature>
<feature type="disulfide bond" evidence="1">
    <location>
        <begin position="130"/>
        <end position="133"/>
    </location>
</feature>
<feature type="disulfide bond" description="Interchain (with C-61 in AhpC); in linked form" evidence="1">
    <location>
        <position position="133"/>
    </location>
</feature>
<keyword id="KW-0049">Antioxidant</keyword>
<keyword id="KW-1015">Disulfide bond</keyword>
<keyword id="KW-0560">Oxidoreductase</keyword>
<keyword id="KW-0575">Peroxidase</keyword>
<keyword id="KW-0676">Redox-active center</keyword>
<keyword id="KW-1185">Reference proteome</keyword>
<protein>
    <recommendedName>
        <fullName evidence="2">Alkyl hydroperoxide reductase AhpD</fullName>
        <ecNumber evidence="2">1.11.1.28</ecNumber>
    </recommendedName>
    <alternativeName>
        <fullName evidence="2">Alkylhydroperoxidase AhpD</fullName>
    </alternativeName>
</protein>
<dbReference type="EC" id="1.11.1.28" evidence="2"/>
<dbReference type="EMBL" id="AE000516">
    <property type="protein sequence ID" value="AAK46801.1"/>
    <property type="molecule type" value="Genomic_DNA"/>
</dbReference>
<dbReference type="PIR" id="C70679">
    <property type="entry name" value="C70679"/>
</dbReference>
<dbReference type="RefSeq" id="WP_003412536.1">
    <property type="nucleotide sequence ID" value="NZ_KK341227.1"/>
</dbReference>
<dbReference type="SMR" id="P9WQB4"/>
<dbReference type="KEGG" id="mtc:MT2504"/>
<dbReference type="PATRIC" id="fig|83331.31.peg.2699"/>
<dbReference type="HOGENOM" id="CLU_105328_0_0_11"/>
<dbReference type="Proteomes" id="UP000001020">
    <property type="component" value="Chromosome"/>
</dbReference>
<dbReference type="GO" id="GO:0008785">
    <property type="term" value="F:alkyl hydroperoxide reductase activity"/>
    <property type="evidence" value="ECO:0007669"/>
    <property type="project" value="UniProtKB-UniRule"/>
</dbReference>
<dbReference type="GO" id="GO:0015036">
    <property type="term" value="F:disulfide oxidoreductase activity"/>
    <property type="evidence" value="ECO:0007669"/>
    <property type="project" value="TreeGrafter"/>
</dbReference>
<dbReference type="GO" id="GO:0032843">
    <property type="term" value="F:hydroperoxide reductase activity"/>
    <property type="evidence" value="ECO:0007669"/>
    <property type="project" value="InterPro"/>
</dbReference>
<dbReference type="GO" id="GO:0051920">
    <property type="term" value="F:peroxiredoxin activity"/>
    <property type="evidence" value="ECO:0007669"/>
    <property type="project" value="InterPro"/>
</dbReference>
<dbReference type="GO" id="GO:0045454">
    <property type="term" value="P:cell redox homeostasis"/>
    <property type="evidence" value="ECO:0007669"/>
    <property type="project" value="TreeGrafter"/>
</dbReference>
<dbReference type="GO" id="GO:0006979">
    <property type="term" value="P:response to oxidative stress"/>
    <property type="evidence" value="ECO:0007669"/>
    <property type="project" value="InterPro"/>
</dbReference>
<dbReference type="FunFam" id="1.20.1290.10:FF:000004">
    <property type="entry name" value="Alkyl hydroperoxide reductase AhpD"/>
    <property type="match status" value="1"/>
</dbReference>
<dbReference type="Gene3D" id="1.20.1290.10">
    <property type="entry name" value="AhpD-like"/>
    <property type="match status" value="1"/>
</dbReference>
<dbReference type="HAMAP" id="MF_01676">
    <property type="entry name" value="AhpD"/>
    <property type="match status" value="1"/>
</dbReference>
<dbReference type="InterPro" id="IPR004674">
    <property type="entry name" value="AhpD"/>
</dbReference>
<dbReference type="InterPro" id="IPR029032">
    <property type="entry name" value="AhpD-like"/>
</dbReference>
<dbReference type="InterPro" id="IPR004675">
    <property type="entry name" value="AhpD_core"/>
</dbReference>
<dbReference type="InterPro" id="IPR003779">
    <property type="entry name" value="CMD-like"/>
</dbReference>
<dbReference type="NCBIfam" id="TIGR00777">
    <property type="entry name" value="ahpD"/>
    <property type="match status" value="1"/>
</dbReference>
<dbReference type="NCBIfam" id="TIGR00778">
    <property type="entry name" value="ahpD_dom"/>
    <property type="match status" value="1"/>
</dbReference>
<dbReference type="PANTHER" id="PTHR33930">
    <property type="entry name" value="ALKYL HYDROPEROXIDE REDUCTASE AHPD"/>
    <property type="match status" value="1"/>
</dbReference>
<dbReference type="PANTHER" id="PTHR33930:SF7">
    <property type="entry name" value="ALKYL HYDROPEROXIDE REDUCTASE AHPD"/>
    <property type="match status" value="1"/>
</dbReference>
<dbReference type="Pfam" id="PF02627">
    <property type="entry name" value="CMD"/>
    <property type="match status" value="1"/>
</dbReference>
<dbReference type="SUPFAM" id="SSF69118">
    <property type="entry name" value="AhpD-like"/>
    <property type="match status" value="1"/>
</dbReference>
<sequence length="177" mass="18781">MSIEKLKAALPEYAKDIKLNLSSITRSSVLDQEQLWGTLLASAAATRNPQVLADIGAEATDHLSAAARHAALGAAAIMGMNNVFYRGRGFLEGRYDDLRPGLRMNIIANPGIPKANFELWSFAVSAINGCSHCLVAHEHTLRTVGVDREAIFEALKAAAIVSGVAQALATIEALSPS</sequence>
<reference key="1">
    <citation type="journal article" date="2002" name="J. Bacteriol.">
        <title>Whole-genome comparison of Mycobacterium tuberculosis clinical and laboratory strains.</title>
        <authorList>
            <person name="Fleischmann R.D."/>
            <person name="Alland D."/>
            <person name="Eisen J.A."/>
            <person name="Carpenter L."/>
            <person name="White O."/>
            <person name="Peterson J.D."/>
            <person name="DeBoy R.T."/>
            <person name="Dodson R.J."/>
            <person name="Gwinn M.L."/>
            <person name="Haft D.H."/>
            <person name="Hickey E.K."/>
            <person name="Kolonay J.F."/>
            <person name="Nelson W.C."/>
            <person name="Umayam L.A."/>
            <person name="Ermolaeva M.D."/>
            <person name="Salzberg S.L."/>
            <person name="Delcher A."/>
            <person name="Utterback T.R."/>
            <person name="Weidman J.F."/>
            <person name="Khouri H.M."/>
            <person name="Gill J."/>
            <person name="Mikula A."/>
            <person name="Bishai W."/>
            <person name="Jacobs W.R. Jr."/>
            <person name="Venter J.C."/>
            <person name="Fraser C.M."/>
        </authorList>
    </citation>
    <scope>NUCLEOTIDE SEQUENCE [LARGE SCALE GENOMIC DNA]</scope>
    <source>
        <strain>CDC 1551 / Oshkosh</strain>
    </source>
</reference>
<evidence type="ECO:0000250" key="1"/>
<evidence type="ECO:0000255" key="2">
    <source>
        <dbReference type="HAMAP-Rule" id="MF_01676"/>
    </source>
</evidence>
<name>AHPD_MYCTO</name>